<feature type="propeptide" id="PRO_0000431191" evidence="1">
    <location>
        <begin position="1"/>
        <end position="14"/>
    </location>
</feature>
<feature type="chain" id="PRO_0000361466" description="Photosystem II CP43 reaction center protein" evidence="1">
    <location>
        <begin position="15"/>
        <end position="473"/>
    </location>
</feature>
<feature type="transmembrane region" description="Helical" evidence="1">
    <location>
        <begin position="69"/>
        <end position="93"/>
    </location>
</feature>
<feature type="transmembrane region" description="Helical" evidence="1">
    <location>
        <begin position="134"/>
        <end position="155"/>
    </location>
</feature>
<feature type="transmembrane region" description="Helical" evidence="1">
    <location>
        <begin position="178"/>
        <end position="200"/>
    </location>
</feature>
<feature type="transmembrane region" description="Helical" evidence="1">
    <location>
        <begin position="255"/>
        <end position="275"/>
    </location>
</feature>
<feature type="transmembrane region" description="Helical" evidence="1">
    <location>
        <begin position="291"/>
        <end position="312"/>
    </location>
</feature>
<feature type="transmembrane region" description="Helical" evidence="1">
    <location>
        <begin position="447"/>
        <end position="471"/>
    </location>
</feature>
<feature type="binding site" evidence="1">
    <location>
        <position position="367"/>
    </location>
    <ligand>
        <name>[CaMn4O5] cluster</name>
        <dbReference type="ChEBI" id="CHEBI:189552"/>
    </ligand>
</feature>
<feature type="modified residue" description="N-acetylthreonine" evidence="1">
    <location>
        <position position="15"/>
    </location>
</feature>
<feature type="modified residue" description="Phosphothreonine" evidence="1">
    <location>
        <position position="15"/>
    </location>
</feature>
<dbReference type="EMBL" id="AY916449">
    <property type="protein sequence ID" value="AAW82499.1"/>
    <property type="molecule type" value="Genomic_DNA"/>
</dbReference>
<dbReference type="RefSeq" id="YP_358574.1">
    <property type="nucleotide sequence ID" value="NC_007499.1"/>
</dbReference>
<dbReference type="SMR" id="Q3BAP4"/>
<dbReference type="GeneID" id="3741654"/>
<dbReference type="GO" id="GO:0009535">
    <property type="term" value="C:chloroplast thylakoid membrane"/>
    <property type="evidence" value="ECO:0007669"/>
    <property type="project" value="UniProtKB-SubCell"/>
</dbReference>
<dbReference type="GO" id="GO:0009523">
    <property type="term" value="C:photosystem II"/>
    <property type="evidence" value="ECO:0007669"/>
    <property type="project" value="UniProtKB-KW"/>
</dbReference>
<dbReference type="GO" id="GO:0016168">
    <property type="term" value="F:chlorophyll binding"/>
    <property type="evidence" value="ECO:0007669"/>
    <property type="project" value="UniProtKB-UniRule"/>
</dbReference>
<dbReference type="GO" id="GO:0045156">
    <property type="term" value="F:electron transporter, transferring electrons within the cyclic electron transport pathway of photosynthesis activity"/>
    <property type="evidence" value="ECO:0007669"/>
    <property type="project" value="InterPro"/>
</dbReference>
<dbReference type="GO" id="GO:0046872">
    <property type="term" value="F:metal ion binding"/>
    <property type="evidence" value="ECO:0007669"/>
    <property type="project" value="UniProtKB-KW"/>
</dbReference>
<dbReference type="GO" id="GO:0009772">
    <property type="term" value="P:photosynthetic electron transport in photosystem II"/>
    <property type="evidence" value="ECO:0007669"/>
    <property type="project" value="InterPro"/>
</dbReference>
<dbReference type="FunFam" id="1.10.10.670:FF:000001">
    <property type="entry name" value="Photosystem II CP43 reaction center protein"/>
    <property type="match status" value="1"/>
</dbReference>
<dbReference type="Gene3D" id="1.10.10.670">
    <property type="entry name" value="photosystem ii from thermosynechococcus elongatus"/>
    <property type="match status" value="1"/>
</dbReference>
<dbReference type="HAMAP" id="MF_01496">
    <property type="entry name" value="PSII_PsbC_CP43"/>
    <property type="match status" value="1"/>
</dbReference>
<dbReference type="InterPro" id="IPR000932">
    <property type="entry name" value="PS_antenna-like"/>
</dbReference>
<dbReference type="InterPro" id="IPR036001">
    <property type="entry name" value="PS_II_antenna-like_sf"/>
</dbReference>
<dbReference type="InterPro" id="IPR005869">
    <property type="entry name" value="PSII_PsbC"/>
</dbReference>
<dbReference type="InterPro" id="IPR044900">
    <property type="entry name" value="PSII_PsbC_sf"/>
</dbReference>
<dbReference type="NCBIfam" id="TIGR01153">
    <property type="entry name" value="psbC"/>
    <property type="match status" value="1"/>
</dbReference>
<dbReference type="Pfam" id="PF00421">
    <property type="entry name" value="PSII"/>
    <property type="match status" value="1"/>
</dbReference>
<dbReference type="SUPFAM" id="SSF161077">
    <property type="entry name" value="Photosystem II antenna protein-like"/>
    <property type="match status" value="1"/>
</dbReference>
<evidence type="ECO:0000255" key="1">
    <source>
        <dbReference type="HAMAP-Rule" id="MF_01496"/>
    </source>
</evidence>
<gene>
    <name evidence="1" type="primary">psbC</name>
</gene>
<name>PSBC_PHAAO</name>
<reference key="1">
    <citation type="journal article" date="2006" name="Mol. Biol. Evol.">
        <title>The chloroplast genome of Phalaenopsis aphrodite (Orchidaceae): comparative analysis of evolutionary rate with that of grasses and its phylogenetic implications.</title>
        <authorList>
            <person name="Chang C.-C."/>
            <person name="Lin H.-C."/>
            <person name="Lin I.-P."/>
            <person name="Chow T.-Y."/>
            <person name="Chen H.-H."/>
            <person name="Chen W.-H."/>
            <person name="Cheng C.-H."/>
            <person name="Lin C.-Y."/>
            <person name="Liu S.-M."/>
            <person name="Chang C.-C."/>
            <person name="Chaw S.-M."/>
        </authorList>
    </citation>
    <scope>NUCLEOTIDE SEQUENCE [LARGE SCALE GENOMIC DNA]</scope>
    <source>
        <strain>cv. Taisugar TS-97</strain>
    </source>
</reference>
<accession>Q3BAP4</accession>
<sequence length="473" mass="51789">MKTLYSLRRFYPVETLFNGTLALVGRDQETTGFAWWAGNARLINLSGKLLGAHVAHAGLIVFWAGAMNLFEVAHFVPEKPMYEQGLILLPHLATLGWGVGPGGEVIDTFPYFVSGVLHLISSAVLGFGGIYHALLGPETLEESFPFFGYVWKDRNKMTTILGIHLILLGIGAFLLVLKALYFGGVYDTWAPGGGDVRKITNLTLSPSVIFGYLLKSPFGGEGWIVSVDDLEDIIGGHVWLGSICILGGIWHILTKPFAWARRAFVWSGEAYLSYSLGALSVFGFIACCFVWFNNTAYPSEFYGPTGPEASQAQAFTFLVRDQRLGANVGSAQGPTGLGKYLMRSPTGEVIFGGETMRFWDLRAPWLEPLRGPNGLDLSRLKKDIQPWQERRSAEYMTHAPLGSLNSVGGVATEINAVNYVSPRSWLATSHFVLGFFLFVGHLWHAGRARAAAAGFEKGIDRDLEPVLSMTPLS</sequence>
<geneLocation type="chloroplast"/>
<comment type="function">
    <text evidence="1">One of the components of the core complex of photosystem II (PSII). It binds chlorophyll and helps catalyze the primary light-induced photochemical processes of PSII. PSII is a light-driven water:plastoquinone oxidoreductase, using light energy to abstract electrons from H(2)O, generating O(2) and a proton gradient subsequently used for ATP formation.</text>
</comment>
<comment type="cofactor">
    <text evidence="1">Binds multiple chlorophylls and provides some of the ligands for the Ca-4Mn-5O cluster of the oxygen-evolving complex. It may also provide a ligand for a Cl- that is required for oxygen evolution. PSII binds additional chlorophylls, carotenoids and specific lipids.</text>
</comment>
<comment type="subunit">
    <text evidence="1">PSII is composed of 1 copy each of membrane proteins PsbA, PsbB, PsbC, PsbD, PsbE, PsbF, PsbH, PsbI, PsbJ, PsbK, PsbL, PsbM, PsbT, PsbX, PsbY, PsbZ, Psb30/Ycf12, at least 3 peripheral proteins of the oxygen-evolving complex and a large number of cofactors. It forms dimeric complexes.</text>
</comment>
<comment type="subcellular location">
    <subcellularLocation>
        <location evidence="1">Plastid</location>
        <location evidence="1">Chloroplast thylakoid membrane</location>
        <topology evidence="1">Multi-pass membrane protein</topology>
    </subcellularLocation>
</comment>
<comment type="similarity">
    <text evidence="1">Belongs to the PsbB/PsbC family. PsbC subfamily.</text>
</comment>
<keyword id="KW-0007">Acetylation</keyword>
<keyword id="KW-0148">Chlorophyll</keyword>
<keyword id="KW-0150">Chloroplast</keyword>
<keyword id="KW-0157">Chromophore</keyword>
<keyword id="KW-0464">Manganese</keyword>
<keyword id="KW-0472">Membrane</keyword>
<keyword id="KW-0479">Metal-binding</keyword>
<keyword id="KW-0597">Phosphoprotein</keyword>
<keyword id="KW-0602">Photosynthesis</keyword>
<keyword id="KW-0604">Photosystem II</keyword>
<keyword id="KW-0934">Plastid</keyword>
<keyword id="KW-0793">Thylakoid</keyword>
<keyword id="KW-0812">Transmembrane</keyword>
<keyword id="KW-1133">Transmembrane helix</keyword>
<proteinExistence type="inferred from homology"/>
<organism>
    <name type="scientific">Phalaenopsis aphrodite subsp. formosana</name>
    <name type="common">Moth orchid</name>
    <dbReference type="NCBI Taxonomy" id="308872"/>
    <lineage>
        <taxon>Eukaryota</taxon>
        <taxon>Viridiplantae</taxon>
        <taxon>Streptophyta</taxon>
        <taxon>Embryophyta</taxon>
        <taxon>Tracheophyta</taxon>
        <taxon>Spermatophyta</taxon>
        <taxon>Magnoliopsida</taxon>
        <taxon>Liliopsida</taxon>
        <taxon>Asparagales</taxon>
        <taxon>Orchidaceae</taxon>
        <taxon>Epidendroideae</taxon>
        <taxon>Vandeae</taxon>
        <taxon>Aeridinae</taxon>
        <taxon>Phalaenopsis</taxon>
    </lineage>
</organism>
<protein>
    <recommendedName>
        <fullName evidence="1">Photosystem II CP43 reaction center protein</fullName>
    </recommendedName>
    <alternativeName>
        <fullName evidence="1">PSII 43 kDa protein</fullName>
    </alternativeName>
    <alternativeName>
        <fullName evidence="1">Protein CP-43</fullName>
    </alternativeName>
</protein>